<accession>Q05201</accession>
<accession>Q961V4</accession>
<accession>Q9VMC1</accession>
<proteinExistence type="evidence at protein level"/>
<comment type="function">
    <text evidence="3 4 5 6 7">Tyrosine phosphatase thought to play a role in transcription regulation during organogenesis through its intrinsic protein phosphatase activity (PubMed:14628052, PubMed:14628053). The phosphatase activity was shown in vitro. Appears to function together with So and Dac in eye development (PubMed:9428512, PubMed:9428513). Required for the survival of eye progenitor cells at a critical stage in morphogenesis (PubMed:8431945).</text>
</comment>
<comment type="catalytic activity">
    <reaction evidence="3">
        <text>O-phospho-L-tyrosyl-[protein] + H2O = L-tyrosyl-[protein] + phosphate</text>
        <dbReference type="Rhea" id="RHEA:10684"/>
        <dbReference type="Rhea" id="RHEA-COMP:10136"/>
        <dbReference type="Rhea" id="RHEA-COMP:20101"/>
        <dbReference type="ChEBI" id="CHEBI:15377"/>
        <dbReference type="ChEBI" id="CHEBI:43474"/>
        <dbReference type="ChEBI" id="CHEBI:46858"/>
        <dbReference type="ChEBI" id="CHEBI:61978"/>
        <dbReference type="EC" id="3.1.3.48"/>
    </reaction>
</comment>
<comment type="cofactor">
    <cofactor evidence="1">
        <name>Mg(2+)</name>
        <dbReference type="ChEBI" id="CHEBI:18420"/>
    </cofactor>
    <text evidence="1">Binds 1 Mg(2+) ion per subunit.</text>
</comment>
<comment type="subunit">
    <text evidence="6 7">Interacts with Dac and So.</text>
</comment>
<comment type="subcellular location">
    <subcellularLocation>
        <location evidence="5">Nucleus</location>
    </subcellularLocation>
</comment>
<comment type="alternative products">
    <event type="alternative splicing"/>
    <isoform>
        <id>Q05201-1</id>
        <name>1</name>
        <name>I</name>
        <name>A</name>
        <sequence type="displayed"/>
    </isoform>
    <isoform>
        <id>Q05201-2</id>
        <name>2</name>
        <name>II</name>
        <name>B</name>
        <sequence type="described" ref="VSP_001500"/>
    </isoform>
</comment>
<comment type="similarity">
    <text evidence="10">Belongs to the HAD-like hydrolase superfamily. EYA family.</text>
</comment>
<dbReference type="EC" id="3.1.3.48" evidence="3"/>
<dbReference type="EMBL" id="L08501">
    <property type="protein sequence ID" value="AAA28723.1"/>
    <property type="molecule type" value="mRNA"/>
</dbReference>
<dbReference type="EMBL" id="L08502">
    <property type="protein sequence ID" value="AAA28310.1"/>
    <property type="molecule type" value="mRNA"/>
</dbReference>
<dbReference type="EMBL" id="AE014134">
    <property type="protein sequence ID" value="AAF52400.1"/>
    <property type="molecule type" value="Genomic_DNA"/>
</dbReference>
<dbReference type="EMBL" id="AE014134">
    <property type="protein sequence ID" value="AAN10587.1"/>
    <property type="molecule type" value="Genomic_DNA"/>
</dbReference>
<dbReference type="EMBL" id="AY047539">
    <property type="protein sequence ID" value="AAK77271.1"/>
    <property type="molecule type" value="mRNA"/>
</dbReference>
<dbReference type="PIR" id="A45174">
    <property type="entry name" value="A45174"/>
</dbReference>
<dbReference type="PIR" id="B45174">
    <property type="entry name" value="B45174"/>
</dbReference>
<dbReference type="RefSeq" id="NP_523492.1">
    <molecule id="Q05201-2"/>
    <property type="nucleotide sequence ID" value="NM_078768.4"/>
</dbReference>
<dbReference type="RefSeq" id="NP_723188.1">
    <molecule id="Q05201-1"/>
    <property type="nucleotide sequence ID" value="NM_164693.2"/>
</dbReference>
<dbReference type="SMR" id="Q05201"/>
<dbReference type="BioGRID" id="60071">
    <property type="interactions" value="37"/>
</dbReference>
<dbReference type="DIP" id="DIP-19253N"/>
<dbReference type="FunCoup" id="Q05201">
    <property type="interactions" value="556"/>
</dbReference>
<dbReference type="IntAct" id="Q05201">
    <property type="interactions" value="2"/>
</dbReference>
<dbReference type="STRING" id="7227.FBpp0078964"/>
<dbReference type="MoonProt" id="Q05201"/>
<dbReference type="PaxDb" id="7227-FBpp0078964"/>
<dbReference type="EnsemblMetazoa" id="FBtr0079334">
    <molecule id="Q05201-2"/>
    <property type="protein sequence ID" value="FBpp0078963"/>
    <property type="gene ID" value="FBgn0000320"/>
</dbReference>
<dbReference type="EnsemblMetazoa" id="FBtr0079335">
    <molecule id="Q05201-1"/>
    <property type="protein sequence ID" value="FBpp0078964"/>
    <property type="gene ID" value="FBgn0000320"/>
</dbReference>
<dbReference type="GeneID" id="33916"/>
<dbReference type="KEGG" id="dme:Dmel_CG9554"/>
<dbReference type="AGR" id="FB:FBgn0000320"/>
<dbReference type="CTD" id="33916"/>
<dbReference type="FlyBase" id="FBgn0000320">
    <property type="gene designation" value="eya"/>
</dbReference>
<dbReference type="VEuPathDB" id="VectorBase:FBgn0000320"/>
<dbReference type="eggNOG" id="KOG3107">
    <property type="taxonomic scope" value="Eukaryota"/>
</dbReference>
<dbReference type="GeneTree" id="ENSGT00950000182978"/>
<dbReference type="InParanoid" id="Q05201"/>
<dbReference type="OMA" id="NMLAHSH"/>
<dbReference type="OrthoDB" id="167668at2759"/>
<dbReference type="PhylomeDB" id="Q05201"/>
<dbReference type="Reactome" id="R-DME-5693565">
    <property type="pathway name" value="Recruitment and ATM-mediated phosphorylation of repair and signaling proteins at DNA double strand breaks"/>
</dbReference>
<dbReference type="SignaLink" id="Q05201"/>
<dbReference type="BioGRID-ORCS" id="33916">
    <property type="hits" value="0 hits in 3 CRISPR screens"/>
</dbReference>
<dbReference type="ChiTaRS" id="eya">
    <property type="organism name" value="fly"/>
</dbReference>
<dbReference type="GenomeRNAi" id="33916"/>
<dbReference type="PRO" id="PR:Q05201"/>
<dbReference type="Proteomes" id="UP000000803">
    <property type="component" value="Chromosome 2L"/>
</dbReference>
<dbReference type="Bgee" id="FBgn0000320">
    <property type="expression patterns" value="Expressed in nurse follicle cell (Drosophila) in ovary and 87 other cell types or tissues"/>
</dbReference>
<dbReference type="ExpressionAtlas" id="Q05201">
    <property type="expression patterns" value="baseline and differential"/>
</dbReference>
<dbReference type="GO" id="GO:0005737">
    <property type="term" value="C:cytoplasm"/>
    <property type="evidence" value="ECO:0007005"/>
    <property type="project" value="FlyBase"/>
</dbReference>
<dbReference type="GO" id="GO:0005829">
    <property type="term" value="C:cytosol"/>
    <property type="evidence" value="ECO:0000314"/>
    <property type="project" value="FlyBase"/>
</dbReference>
<dbReference type="GO" id="GO:0005634">
    <property type="term" value="C:nucleus"/>
    <property type="evidence" value="ECO:0000314"/>
    <property type="project" value="UniProtKB"/>
</dbReference>
<dbReference type="GO" id="GO:0140297">
    <property type="term" value="F:DNA-binding transcription factor binding"/>
    <property type="evidence" value="ECO:0000353"/>
    <property type="project" value="FlyBase"/>
</dbReference>
<dbReference type="GO" id="GO:0046872">
    <property type="term" value="F:metal ion binding"/>
    <property type="evidence" value="ECO:0007669"/>
    <property type="project" value="UniProtKB-KW"/>
</dbReference>
<dbReference type="GO" id="GO:0004726">
    <property type="term" value="F:non-membrane spanning protein tyrosine phosphatase activity"/>
    <property type="evidence" value="ECO:0000314"/>
    <property type="project" value="FlyBase"/>
</dbReference>
<dbReference type="GO" id="GO:0004721">
    <property type="term" value="F:phosphoprotein phosphatase activity"/>
    <property type="evidence" value="ECO:0000315"/>
    <property type="project" value="FlyBase"/>
</dbReference>
<dbReference type="GO" id="GO:0004725">
    <property type="term" value="F:protein tyrosine phosphatase activity"/>
    <property type="evidence" value="ECO:0000318"/>
    <property type="project" value="GO_Central"/>
</dbReference>
<dbReference type="GO" id="GO:0030946">
    <property type="term" value="F:protein tyrosine phosphatase activity, metal-dependent"/>
    <property type="evidence" value="ECO:0000314"/>
    <property type="project" value="FlyBase"/>
</dbReference>
<dbReference type="GO" id="GO:0003713">
    <property type="term" value="F:transcription coactivator activity"/>
    <property type="evidence" value="ECO:0000315"/>
    <property type="project" value="FlyBase"/>
</dbReference>
<dbReference type="GO" id="GO:0007411">
    <property type="term" value="P:axon guidance"/>
    <property type="evidence" value="ECO:0000316"/>
    <property type="project" value="FlyBase"/>
</dbReference>
<dbReference type="GO" id="GO:0001746">
    <property type="term" value="P:Bolwig's organ morphogenesis"/>
    <property type="evidence" value="ECO:0000315"/>
    <property type="project" value="FlyBase"/>
</dbReference>
<dbReference type="GO" id="GO:0030154">
    <property type="term" value="P:cell differentiation"/>
    <property type="evidence" value="ECO:0000318"/>
    <property type="project" value="GO_Central"/>
</dbReference>
<dbReference type="GO" id="GO:0042675">
    <property type="term" value="P:compound eye cone cell differentiation"/>
    <property type="evidence" value="ECO:0000315"/>
    <property type="project" value="FlyBase"/>
</dbReference>
<dbReference type="GO" id="GO:0048749">
    <property type="term" value="P:compound eye development"/>
    <property type="evidence" value="ECO:0000315"/>
    <property type="project" value="FlyBase"/>
</dbReference>
<dbReference type="GO" id="GO:0042051">
    <property type="term" value="P:compound eye photoreceptor development"/>
    <property type="evidence" value="ECO:0000315"/>
    <property type="project" value="FlyBase"/>
</dbReference>
<dbReference type="GO" id="GO:0007455">
    <property type="term" value="P:eye-antennal disc morphogenesis"/>
    <property type="evidence" value="ECO:0000315"/>
    <property type="project" value="UniProtKB"/>
</dbReference>
<dbReference type="GO" id="GO:0030707">
    <property type="term" value="P:follicle cell of egg chamber development"/>
    <property type="evidence" value="ECO:0000315"/>
    <property type="project" value="FlyBase"/>
</dbReference>
<dbReference type="GO" id="GO:0008406">
    <property type="term" value="P:gonad development"/>
    <property type="evidence" value="ECO:0000315"/>
    <property type="project" value="FlyBase"/>
</dbReference>
<dbReference type="GO" id="GO:0045087">
    <property type="term" value="P:innate immune response"/>
    <property type="evidence" value="ECO:0000316"/>
    <property type="project" value="FlyBase"/>
</dbReference>
<dbReference type="GO" id="GO:0001744">
    <property type="term" value="P:insect visual primordium formation"/>
    <property type="evidence" value="ECO:0000315"/>
    <property type="project" value="FlyBase"/>
</dbReference>
<dbReference type="GO" id="GO:0007526">
    <property type="term" value="P:larval somatic muscle development"/>
    <property type="evidence" value="ECO:0000315"/>
    <property type="project" value="FlyBase"/>
</dbReference>
<dbReference type="GO" id="GO:0008584">
    <property type="term" value="P:male gonad development"/>
    <property type="evidence" value="ECO:0000315"/>
    <property type="project" value="FlyBase"/>
</dbReference>
<dbReference type="GO" id="GO:0007498">
    <property type="term" value="P:mesoderm development"/>
    <property type="evidence" value="ECO:0000315"/>
    <property type="project" value="FlyBase"/>
</dbReference>
<dbReference type="GO" id="GO:0009996">
    <property type="term" value="P:negative regulation of cell fate specification"/>
    <property type="evidence" value="ECO:0000315"/>
    <property type="project" value="FlyBase"/>
</dbReference>
<dbReference type="GO" id="GO:2001240">
    <property type="term" value="P:negative regulation of extrinsic apoptotic signaling pathway in absence of ligand"/>
    <property type="evidence" value="ECO:0000318"/>
    <property type="project" value="GO_Central"/>
</dbReference>
<dbReference type="GO" id="GO:0072499">
    <property type="term" value="P:photoreceptor cell axon guidance"/>
    <property type="evidence" value="ECO:0000315"/>
    <property type="project" value="FlyBase"/>
</dbReference>
<dbReference type="GO" id="GO:0070285">
    <property type="term" value="P:pigment cell development"/>
    <property type="evidence" value="ECO:0000315"/>
    <property type="project" value="FlyBase"/>
</dbReference>
<dbReference type="GO" id="GO:0045739">
    <property type="term" value="P:positive regulation of DNA repair"/>
    <property type="evidence" value="ECO:0000318"/>
    <property type="project" value="GO_Central"/>
</dbReference>
<dbReference type="GO" id="GO:0010628">
    <property type="term" value="P:positive regulation of gene expression"/>
    <property type="evidence" value="ECO:0000315"/>
    <property type="project" value="FlyBase"/>
</dbReference>
<dbReference type="GO" id="GO:0045944">
    <property type="term" value="P:positive regulation of transcription by RNA polymerase II"/>
    <property type="evidence" value="ECO:0000315"/>
    <property type="project" value="FlyBase"/>
</dbReference>
<dbReference type="GO" id="GO:0009416">
    <property type="term" value="P:response to light stimulus"/>
    <property type="evidence" value="ECO:0000315"/>
    <property type="project" value="FlyBase"/>
</dbReference>
<dbReference type="GO" id="GO:0007435">
    <property type="term" value="P:salivary gland morphogenesis"/>
    <property type="evidence" value="ECO:0000315"/>
    <property type="project" value="FlyBase"/>
</dbReference>
<dbReference type="GO" id="GO:0007283">
    <property type="term" value="P:spermatogenesis"/>
    <property type="evidence" value="ECO:0000315"/>
    <property type="project" value="FlyBase"/>
</dbReference>
<dbReference type="GO" id="GO:0007419">
    <property type="term" value="P:ventral cord development"/>
    <property type="evidence" value="ECO:0000316"/>
    <property type="project" value="FlyBase"/>
</dbReference>
<dbReference type="CDD" id="cd02601">
    <property type="entry name" value="HAD_Eya"/>
    <property type="match status" value="1"/>
</dbReference>
<dbReference type="FunFam" id="3.40.50.12350:FF:000001">
    <property type="entry name" value="Eyes absent homolog"/>
    <property type="match status" value="1"/>
</dbReference>
<dbReference type="Gene3D" id="3.40.50.12350">
    <property type="match status" value="1"/>
</dbReference>
<dbReference type="InterPro" id="IPR028472">
    <property type="entry name" value="EYA"/>
</dbReference>
<dbReference type="InterPro" id="IPR006545">
    <property type="entry name" value="EYA_dom"/>
</dbReference>
<dbReference type="InterPro" id="IPR042577">
    <property type="entry name" value="EYA_dom_metazoan"/>
</dbReference>
<dbReference type="InterPro" id="IPR038102">
    <property type="entry name" value="EYA_dom_sf"/>
</dbReference>
<dbReference type="NCBIfam" id="TIGR01658">
    <property type="entry name" value="EYA-cons_domain"/>
    <property type="match status" value="1"/>
</dbReference>
<dbReference type="PANTHER" id="PTHR10190:SF16">
    <property type="entry name" value="DEVELOPMENTAL PROTEIN EYES ABSENT"/>
    <property type="match status" value="1"/>
</dbReference>
<dbReference type="PANTHER" id="PTHR10190">
    <property type="entry name" value="EYES ABSENT"/>
    <property type="match status" value="1"/>
</dbReference>
<dbReference type="Pfam" id="PF00702">
    <property type="entry name" value="Hydrolase"/>
    <property type="match status" value="1"/>
</dbReference>
<evidence type="ECO:0000250" key="1">
    <source>
        <dbReference type="UniProtKB" id="O00167"/>
    </source>
</evidence>
<evidence type="ECO:0000256" key="2">
    <source>
        <dbReference type="SAM" id="MobiDB-lite"/>
    </source>
</evidence>
<evidence type="ECO:0000269" key="3">
    <source>
    </source>
</evidence>
<evidence type="ECO:0000269" key="4">
    <source>
    </source>
</evidence>
<evidence type="ECO:0000269" key="5">
    <source>
    </source>
</evidence>
<evidence type="ECO:0000269" key="6">
    <source>
    </source>
</evidence>
<evidence type="ECO:0000269" key="7">
    <source>
    </source>
</evidence>
<evidence type="ECO:0000303" key="8">
    <source>
    </source>
</evidence>
<evidence type="ECO:0000303" key="9">
    <source>
    </source>
</evidence>
<evidence type="ECO:0000305" key="10"/>
<gene>
    <name type="primary">eya</name>
    <name type="synonym">cli</name>
    <name type="ORF">CG9554</name>
</gene>
<name>EYA_DROME</name>
<feature type="chain" id="PRO_0000218655" description="Protein phosphatase eya">
    <location>
        <begin position="1"/>
        <end position="766"/>
    </location>
</feature>
<feature type="region of interest" description="Disordered" evidence="2">
    <location>
        <begin position="22"/>
        <end position="131"/>
    </location>
</feature>
<feature type="region of interest" description="Disordered" evidence="2">
    <location>
        <begin position="200"/>
        <end position="223"/>
    </location>
</feature>
<feature type="region of interest" description="Disordered" evidence="2">
    <location>
        <begin position="365"/>
        <end position="419"/>
    </location>
</feature>
<feature type="region of interest" description="Disordered" evidence="2">
    <location>
        <begin position="437"/>
        <end position="489"/>
    </location>
</feature>
<feature type="compositionally biased region" description="Basic and acidic residues" evidence="2">
    <location>
        <begin position="22"/>
        <end position="40"/>
    </location>
</feature>
<feature type="compositionally biased region" description="Low complexity" evidence="2">
    <location>
        <begin position="45"/>
        <end position="76"/>
    </location>
</feature>
<feature type="compositionally biased region" description="Gly residues" evidence="2">
    <location>
        <begin position="89"/>
        <end position="110"/>
    </location>
</feature>
<feature type="compositionally biased region" description="Low complexity" evidence="2">
    <location>
        <begin position="365"/>
        <end position="384"/>
    </location>
</feature>
<feature type="compositionally biased region" description="Polar residues" evidence="2">
    <location>
        <begin position="385"/>
        <end position="401"/>
    </location>
</feature>
<feature type="compositionally biased region" description="Polar residues" evidence="2">
    <location>
        <begin position="472"/>
        <end position="486"/>
    </location>
</feature>
<feature type="active site" description="Nucleophile" evidence="1">
    <location>
        <position position="499"/>
    </location>
</feature>
<feature type="active site" description="Proton donor" evidence="1">
    <location>
        <position position="501"/>
    </location>
</feature>
<feature type="binding site" evidence="1">
    <location>
        <position position="499"/>
    </location>
    <ligand>
        <name>Mg(2+)</name>
        <dbReference type="ChEBI" id="CHEBI:18420"/>
    </ligand>
</feature>
<feature type="binding site" evidence="1">
    <location>
        <position position="501"/>
    </location>
    <ligand>
        <name>Mg(2+)</name>
        <dbReference type="ChEBI" id="CHEBI:18420"/>
    </ligand>
</feature>
<feature type="binding site" evidence="1">
    <location>
        <position position="730"/>
    </location>
    <ligand>
        <name>Mg(2+)</name>
        <dbReference type="ChEBI" id="CHEBI:18420"/>
    </ligand>
</feature>
<feature type="splice variant" id="VSP_001500" description="In isoform 2." evidence="8 9">
    <original>MVTLMPYNYAAPRCGLIDKMIEP</original>
    <variation>MLYNVPCYQNFSTLDYY</variation>
    <location>
        <begin position="1"/>
        <end position="23"/>
    </location>
</feature>
<feature type="mutagenesis site" description="Highly reduced ectopic eye induction and diminishes degree of ommatidial restoration in eyeless phenotype rescue assay." evidence="3 4">
    <original>D</original>
    <variation>N</variation>
    <location>
        <position position="499"/>
    </location>
</feature>
<feature type="mutagenesis site" description="Highly reduced ectopic eye induction and diminishes degree of ommatidial restoration in eyeless phenotype rescue assay." evidence="4">
    <original>S</original>
    <variation>A</variation>
    <location>
        <position position="676"/>
    </location>
</feature>
<feature type="mutagenesis site" description="Highly reduced ectopic eye induction and diminishes degree of ommatidial restoration in eyeless phenotype rescue assay." evidence="4">
    <original>K</original>
    <variation>Q</variation>
    <location>
        <position position="705"/>
    </location>
</feature>
<feature type="mutagenesis site" description="Highly reduced ectopic eye induction." evidence="4">
    <original>D</original>
    <variation>N</variation>
    <location>
        <position position="730"/>
    </location>
</feature>
<feature type="mutagenesis site" description="Highly reduced ectopic eye induction." evidence="4">
    <original>E</original>
    <variation>Q</variation>
    <location>
        <position position="734"/>
    </location>
</feature>
<protein>
    <recommendedName>
        <fullName evidence="10">Protein phosphatase eya</fullName>
        <ecNumber evidence="3">3.1.3.48</ecNumber>
    </recommendedName>
    <alternativeName>
        <fullName>Developmental protein eyes absent</fullName>
    </alternativeName>
    <alternativeName>
        <fullName>Protein Clift</fullName>
    </alternativeName>
</protein>
<keyword id="KW-0010">Activator</keyword>
<keyword id="KW-0025">Alternative splicing</keyword>
<keyword id="KW-0217">Developmental protein</keyword>
<keyword id="KW-0378">Hydrolase</keyword>
<keyword id="KW-0460">Magnesium</keyword>
<keyword id="KW-0479">Metal-binding</keyword>
<keyword id="KW-0539">Nucleus</keyword>
<keyword id="KW-0904">Protein phosphatase</keyword>
<keyword id="KW-1185">Reference proteome</keyword>
<keyword id="KW-0804">Transcription</keyword>
<keyword id="KW-0805">Transcription regulation</keyword>
<reference key="1">
    <citation type="journal article" date="1993" name="Cell">
        <title>The eyes absent gene: genetic control of cell survival and differentiation in the developing Drosophila eye.</title>
        <authorList>
            <person name="Bonini N.M."/>
            <person name="Leiserson W.M."/>
            <person name="Benzer S."/>
        </authorList>
    </citation>
    <scope>NUCLEOTIDE SEQUENCE [MRNA] (ISOFORMS 1 AND 2)</scope>
    <scope>FUNCTION</scope>
    <scope>SUBCELLULAR LOCATION</scope>
    <source>
        <tissue>Head</tissue>
    </source>
</reference>
<reference key="2">
    <citation type="journal article" date="2000" name="Science">
        <title>The genome sequence of Drosophila melanogaster.</title>
        <authorList>
            <person name="Adams M.D."/>
            <person name="Celniker S.E."/>
            <person name="Holt R.A."/>
            <person name="Evans C.A."/>
            <person name="Gocayne J.D."/>
            <person name="Amanatides P.G."/>
            <person name="Scherer S.E."/>
            <person name="Li P.W."/>
            <person name="Hoskins R.A."/>
            <person name="Galle R.F."/>
            <person name="George R.A."/>
            <person name="Lewis S.E."/>
            <person name="Richards S."/>
            <person name="Ashburner M."/>
            <person name="Henderson S.N."/>
            <person name="Sutton G.G."/>
            <person name="Wortman J.R."/>
            <person name="Yandell M.D."/>
            <person name="Zhang Q."/>
            <person name="Chen L.X."/>
            <person name="Brandon R.C."/>
            <person name="Rogers Y.-H.C."/>
            <person name="Blazej R.G."/>
            <person name="Champe M."/>
            <person name="Pfeiffer B.D."/>
            <person name="Wan K.H."/>
            <person name="Doyle C."/>
            <person name="Baxter E.G."/>
            <person name="Helt G."/>
            <person name="Nelson C.R."/>
            <person name="Miklos G.L.G."/>
            <person name="Abril J.F."/>
            <person name="Agbayani A."/>
            <person name="An H.-J."/>
            <person name="Andrews-Pfannkoch C."/>
            <person name="Baldwin D."/>
            <person name="Ballew R.M."/>
            <person name="Basu A."/>
            <person name="Baxendale J."/>
            <person name="Bayraktaroglu L."/>
            <person name="Beasley E.M."/>
            <person name="Beeson K.Y."/>
            <person name="Benos P.V."/>
            <person name="Berman B.P."/>
            <person name="Bhandari D."/>
            <person name="Bolshakov S."/>
            <person name="Borkova D."/>
            <person name="Botchan M.R."/>
            <person name="Bouck J."/>
            <person name="Brokstein P."/>
            <person name="Brottier P."/>
            <person name="Burtis K.C."/>
            <person name="Busam D.A."/>
            <person name="Butler H."/>
            <person name="Cadieu E."/>
            <person name="Center A."/>
            <person name="Chandra I."/>
            <person name="Cherry J.M."/>
            <person name="Cawley S."/>
            <person name="Dahlke C."/>
            <person name="Davenport L.B."/>
            <person name="Davies P."/>
            <person name="de Pablos B."/>
            <person name="Delcher A."/>
            <person name="Deng Z."/>
            <person name="Mays A.D."/>
            <person name="Dew I."/>
            <person name="Dietz S.M."/>
            <person name="Dodson K."/>
            <person name="Doup L.E."/>
            <person name="Downes M."/>
            <person name="Dugan-Rocha S."/>
            <person name="Dunkov B.C."/>
            <person name="Dunn P."/>
            <person name="Durbin K.J."/>
            <person name="Evangelista C.C."/>
            <person name="Ferraz C."/>
            <person name="Ferriera S."/>
            <person name="Fleischmann W."/>
            <person name="Fosler C."/>
            <person name="Gabrielian A.E."/>
            <person name="Garg N.S."/>
            <person name="Gelbart W.M."/>
            <person name="Glasser K."/>
            <person name="Glodek A."/>
            <person name="Gong F."/>
            <person name="Gorrell J.H."/>
            <person name="Gu Z."/>
            <person name="Guan P."/>
            <person name="Harris M."/>
            <person name="Harris N.L."/>
            <person name="Harvey D.A."/>
            <person name="Heiman T.J."/>
            <person name="Hernandez J.R."/>
            <person name="Houck J."/>
            <person name="Hostin D."/>
            <person name="Houston K.A."/>
            <person name="Howland T.J."/>
            <person name="Wei M.-H."/>
            <person name="Ibegwam C."/>
            <person name="Jalali M."/>
            <person name="Kalush F."/>
            <person name="Karpen G.H."/>
            <person name="Ke Z."/>
            <person name="Kennison J.A."/>
            <person name="Ketchum K.A."/>
            <person name="Kimmel B.E."/>
            <person name="Kodira C.D."/>
            <person name="Kraft C.L."/>
            <person name="Kravitz S."/>
            <person name="Kulp D."/>
            <person name="Lai Z."/>
            <person name="Lasko P."/>
            <person name="Lei Y."/>
            <person name="Levitsky A.A."/>
            <person name="Li J.H."/>
            <person name="Li Z."/>
            <person name="Liang Y."/>
            <person name="Lin X."/>
            <person name="Liu X."/>
            <person name="Mattei B."/>
            <person name="McIntosh T.C."/>
            <person name="McLeod M.P."/>
            <person name="McPherson D."/>
            <person name="Merkulov G."/>
            <person name="Milshina N.V."/>
            <person name="Mobarry C."/>
            <person name="Morris J."/>
            <person name="Moshrefi A."/>
            <person name="Mount S.M."/>
            <person name="Moy M."/>
            <person name="Murphy B."/>
            <person name="Murphy L."/>
            <person name="Muzny D.M."/>
            <person name="Nelson D.L."/>
            <person name="Nelson D.R."/>
            <person name="Nelson K.A."/>
            <person name="Nixon K."/>
            <person name="Nusskern D.R."/>
            <person name="Pacleb J.M."/>
            <person name="Palazzolo M."/>
            <person name="Pittman G.S."/>
            <person name="Pan S."/>
            <person name="Pollard J."/>
            <person name="Puri V."/>
            <person name="Reese M.G."/>
            <person name="Reinert K."/>
            <person name="Remington K."/>
            <person name="Saunders R.D.C."/>
            <person name="Scheeler F."/>
            <person name="Shen H."/>
            <person name="Shue B.C."/>
            <person name="Siden-Kiamos I."/>
            <person name="Simpson M."/>
            <person name="Skupski M.P."/>
            <person name="Smith T.J."/>
            <person name="Spier E."/>
            <person name="Spradling A.C."/>
            <person name="Stapleton M."/>
            <person name="Strong R."/>
            <person name="Sun E."/>
            <person name="Svirskas R."/>
            <person name="Tector C."/>
            <person name="Turner R."/>
            <person name="Venter E."/>
            <person name="Wang A.H."/>
            <person name="Wang X."/>
            <person name="Wang Z.-Y."/>
            <person name="Wassarman D.A."/>
            <person name="Weinstock G.M."/>
            <person name="Weissenbach J."/>
            <person name="Williams S.M."/>
            <person name="Woodage T."/>
            <person name="Worley K.C."/>
            <person name="Wu D."/>
            <person name="Yang S."/>
            <person name="Yao Q.A."/>
            <person name="Ye J."/>
            <person name="Yeh R.-F."/>
            <person name="Zaveri J.S."/>
            <person name="Zhan M."/>
            <person name="Zhang G."/>
            <person name="Zhao Q."/>
            <person name="Zheng L."/>
            <person name="Zheng X.H."/>
            <person name="Zhong F.N."/>
            <person name="Zhong W."/>
            <person name="Zhou X."/>
            <person name="Zhu S.C."/>
            <person name="Zhu X."/>
            <person name="Smith H.O."/>
            <person name="Gibbs R.A."/>
            <person name="Myers E.W."/>
            <person name="Rubin G.M."/>
            <person name="Venter J.C."/>
        </authorList>
    </citation>
    <scope>NUCLEOTIDE SEQUENCE [LARGE SCALE GENOMIC DNA]</scope>
    <source>
        <strain>Berkeley</strain>
    </source>
</reference>
<reference key="3">
    <citation type="journal article" date="2002" name="Genome Biol.">
        <title>Annotation of the Drosophila melanogaster euchromatic genome: a systematic review.</title>
        <authorList>
            <person name="Misra S."/>
            <person name="Crosby M.A."/>
            <person name="Mungall C.J."/>
            <person name="Matthews B.B."/>
            <person name="Campbell K.S."/>
            <person name="Hradecky P."/>
            <person name="Huang Y."/>
            <person name="Kaminker J.S."/>
            <person name="Millburn G.H."/>
            <person name="Prochnik S.E."/>
            <person name="Smith C.D."/>
            <person name="Tupy J.L."/>
            <person name="Whitfield E.J."/>
            <person name="Bayraktaroglu L."/>
            <person name="Berman B.P."/>
            <person name="Bettencourt B.R."/>
            <person name="Celniker S.E."/>
            <person name="de Grey A.D.N.J."/>
            <person name="Drysdale R.A."/>
            <person name="Harris N.L."/>
            <person name="Richter J."/>
            <person name="Russo S."/>
            <person name="Schroeder A.J."/>
            <person name="Shu S.Q."/>
            <person name="Stapleton M."/>
            <person name="Yamada C."/>
            <person name="Ashburner M."/>
            <person name="Gelbart W.M."/>
            <person name="Rubin G.M."/>
            <person name="Lewis S.E."/>
        </authorList>
    </citation>
    <scope>GENOME REANNOTATION</scope>
    <scope>ALTERNATIVE SPLICING</scope>
    <source>
        <strain>Berkeley</strain>
    </source>
</reference>
<reference key="4">
    <citation type="journal article" date="2002" name="Genome Biol.">
        <title>A Drosophila full-length cDNA resource.</title>
        <authorList>
            <person name="Stapleton M."/>
            <person name="Carlson J.W."/>
            <person name="Brokstein P."/>
            <person name="Yu C."/>
            <person name="Champe M."/>
            <person name="George R.A."/>
            <person name="Guarin H."/>
            <person name="Kronmiller B."/>
            <person name="Pacleb J.M."/>
            <person name="Park S."/>
            <person name="Wan K.H."/>
            <person name="Rubin G.M."/>
            <person name="Celniker S.E."/>
        </authorList>
    </citation>
    <scope>NUCLEOTIDE SEQUENCE [LARGE SCALE MRNA] (ISOFORM 2)</scope>
    <source>
        <strain>Berkeley</strain>
        <tissue>Head</tissue>
    </source>
</reference>
<reference key="5">
    <citation type="journal article" date="1997" name="Cell">
        <title>The eye-specification proteins So and Eya form a complex and regulate multiple steps in Drosophila eye development.</title>
        <authorList>
            <person name="Pignoni F."/>
            <person name="Hu B."/>
            <person name="Zavitz K.H."/>
            <person name="Xiao J."/>
            <person name="Garrity P.A."/>
            <person name="Zipursky S.L."/>
        </authorList>
    </citation>
    <scope>INTERACTION WITH SO</scope>
</reference>
<reference key="6">
    <citation type="journal article" date="1997" name="Cell">
        <title>Dachshund and eyes absent proteins form a complex and function synergistically to induce ectopic eye development in Drosophila.</title>
        <authorList>
            <person name="Chen R."/>
            <person name="Amoui M."/>
            <person name="Zhang Z."/>
            <person name="Mardon G."/>
        </authorList>
    </citation>
    <scope>INTERACTION WITH DAC</scope>
</reference>
<reference key="7">
    <citation type="journal article" date="2003" name="Nature">
        <title>Eyes absent represents a class of protein tyrosine phosphatases.</title>
        <authorList>
            <person name="Rayapureddi J.P."/>
            <person name="Kattamuri C."/>
            <person name="Steinmetz B.D."/>
            <person name="Frankfort B.J."/>
            <person name="Ostrin E.J."/>
            <person name="Mardon G."/>
            <person name="Hegde R.S."/>
        </authorList>
    </citation>
    <scope>FUNCTION</scope>
    <scope>CATALYTIC ACTIVITY</scope>
    <scope>MUTAGENESIS OF ASP-499</scope>
</reference>
<reference key="8">
    <citation type="journal article" date="2003" name="Nature">
        <title>The transcription factor Eyes absent is a protein tyrosine phosphatase.</title>
        <authorList>
            <person name="Tootle T.L."/>
            <person name="Silver S.J."/>
            <person name="Davies E.L."/>
            <person name="Newman V."/>
            <person name="Latek R.R."/>
            <person name="Mills I.A."/>
            <person name="Selengut J.D."/>
            <person name="Parlikar B.E."/>
            <person name="Rebay I."/>
        </authorList>
    </citation>
    <scope>3D-STRUCTURE MODELING OF 493-766</scope>
    <scope>FUNCTION</scope>
    <scope>MUTAGENESIS OF ASP-499; SER-676; LYS-705; ASP-730 AND GLU-734</scope>
</reference>
<sequence length="766" mass="80657">MVTLMPYNYAAPRCGLIDKMIEPKVKRPKTDHTDTHERNRLCNLSQQQQQQQPQQQQTHQQQQQQQQQSHQQSHSSTVLASNGPSSAGAGMGVGVGGGGGSGGGVGGGVGQCSPLGLPPQSQPLQPTIGSLASLSGHYSNGNANPNVNSSSCSLATASSFAQSAGSSFSTYQQAGGTSGGVSGEDGVVGGATVMSHWTHDGTGSSAAVKSESRSPGQVHASLDNGSVAGSNLYGCSSASNPLDGGAVAVNSSAVAAAAAAVYDGKHDYYYYNSMQQYTPPPFYSGYGTPYAAATAARQAKMEPGAAAAAAAYLTPSYAASGNNNSQLYSSPYAGYNNFGQQDYGGYYNEQYGNYYSPANYSPYAVSSPSSSASHGHGFHVAASSNLSESPTDTHSTTPVHQTTHSPHSPLPISPSTGSGIGPLGNVSAAAAAAALNSSGGSSVGTAGSGGVATSKTTPTGKTGRARGRRHQQPSPTRSTASDTGNSEAVKPPERVFVWDLDETLIIFHTLLSGSYANRYTKDHSSLMTIAFRMEEMVFNMADTHFFFNEIEECDQVHIDDVSSDDNGQDLSAYNFATDGFHTNTPPGAPPNLCLPTGVRGGVDWMRKLAFRYRKIKDIYNSYRGNVGTLLGPGKREAWLQIRSEIEVATDNWATLALKCLSMISQRENCVNVLVTSTQLAPALAKVLLFGLGGIFNIENIYSAHKIGHETCYERIVTRFGRKSTYVVIGDGNEEETAAKAMNFPFWRISAHSDIRALYTALDMGFL</sequence>
<organism>
    <name type="scientific">Drosophila melanogaster</name>
    <name type="common">Fruit fly</name>
    <dbReference type="NCBI Taxonomy" id="7227"/>
    <lineage>
        <taxon>Eukaryota</taxon>
        <taxon>Metazoa</taxon>
        <taxon>Ecdysozoa</taxon>
        <taxon>Arthropoda</taxon>
        <taxon>Hexapoda</taxon>
        <taxon>Insecta</taxon>
        <taxon>Pterygota</taxon>
        <taxon>Neoptera</taxon>
        <taxon>Endopterygota</taxon>
        <taxon>Diptera</taxon>
        <taxon>Brachycera</taxon>
        <taxon>Muscomorpha</taxon>
        <taxon>Ephydroidea</taxon>
        <taxon>Drosophilidae</taxon>
        <taxon>Drosophila</taxon>
        <taxon>Sophophora</taxon>
    </lineage>
</organism>